<sequence>MHCKIAIDGPAGSGKTTVAKLIAQKLGIDYLDTGAMYRIVGLYLHSIGVEPKSTSIKDILEKVNIEYIGKDYYLNGKKVGDEIRTPEAGMFASQYAANPEVREFLTKIQKQICSNRSIVAEGRDIGTVVMPDATVKIFLVASPEVRARRRYEELKSKNMEVSYEELLRQIEERDKNDSNRDVAPLVKAPDAIEIDTSNLSIEEVVEKILDIVKERCRIK</sequence>
<organism>
    <name type="scientific">Fervidobacterium nodosum (strain ATCC 35602 / DSM 5306 / Rt17-B1)</name>
    <dbReference type="NCBI Taxonomy" id="381764"/>
    <lineage>
        <taxon>Bacteria</taxon>
        <taxon>Thermotogati</taxon>
        <taxon>Thermotogota</taxon>
        <taxon>Thermotogae</taxon>
        <taxon>Thermotogales</taxon>
        <taxon>Fervidobacteriaceae</taxon>
        <taxon>Fervidobacterium</taxon>
    </lineage>
</organism>
<reference key="1">
    <citation type="submission" date="2007-07" db="EMBL/GenBank/DDBJ databases">
        <title>Complete sequence of Fervidobacterium nodosum Rt17-B1.</title>
        <authorList>
            <consortium name="US DOE Joint Genome Institute"/>
            <person name="Copeland A."/>
            <person name="Lucas S."/>
            <person name="Lapidus A."/>
            <person name="Barry K."/>
            <person name="Glavina del Rio T."/>
            <person name="Dalin E."/>
            <person name="Tice H."/>
            <person name="Pitluck S."/>
            <person name="Saunders E."/>
            <person name="Brettin T."/>
            <person name="Bruce D."/>
            <person name="Detter J.C."/>
            <person name="Han C."/>
            <person name="Schmutz J."/>
            <person name="Larimer F."/>
            <person name="Land M."/>
            <person name="Hauser L."/>
            <person name="Kyrpides N."/>
            <person name="Mikhailova N."/>
            <person name="Nelson K."/>
            <person name="Gogarten J.P."/>
            <person name="Noll K."/>
            <person name="Richardson P."/>
        </authorList>
    </citation>
    <scope>NUCLEOTIDE SEQUENCE [LARGE SCALE GENOMIC DNA]</scope>
    <source>
        <strain>ATCC 35602 / DSM 5306 / Rt17-B1</strain>
    </source>
</reference>
<feature type="chain" id="PRO_1000071821" description="Cytidylate kinase">
    <location>
        <begin position="1"/>
        <end position="219"/>
    </location>
</feature>
<feature type="binding site" evidence="1">
    <location>
        <begin position="9"/>
        <end position="17"/>
    </location>
    <ligand>
        <name>ATP</name>
        <dbReference type="ChEBI" id="CHEBI:30616"/>
    </ligand>
</feature>
<evidence type="ECO:0000255" key="1">
    <source>
        <dbReference type="HAMAP-Rule" id="MF_00238"/>
    </source>
</evidence>
<keyword id="KW-0067">ATP-binding</keyword>
<keyword id="KW-0963">Cytoplasm</keyword>
<keyword id="KW-0418">Kinase</keyword>
<keyword id="KW-0547">Nucleotide-binding</keyword>
<keyword id="KW-1185">Reference proteome</keyword>
<keyword id="KW-0808">Transferase</keyword>
<proteinExistence type="inferred from homology"/>
<name>KCY_FERNB</name>
<dbReference type="EC" id="2.7.4.25" evidence="1"/>
<dbReference type="EMBL" id="CP000771">
    <property type="protein sequence ID" value="ABS61079.1"/>
    <property type="molecule type" value="Genomic_DNA"/>
</dbReference>
<dbReference type="RefSeq" id="WP_011994389.1">
    <property type="nucleotide sequence ID" value="NC_009718.1"/>
</dbReference>
<dbReference type="SMR" id="A7HME6"/>
<dbReference type="STRING" id="381764.Fnod_1232"/>
<dbReference type="KEGG" id="fno:Fnod_1232"/>
<dbReference type="eggNOG" id="COG0283">
    <property type="taxonomic scope" value="Bacteria"/>
</dbReference>
<dbReference type="HOGENOM" id="CLU_079959_0_2_0"/>
<dbReference type="OrthoDB" id="9807434at2"/>
<dbReference type="Proteomes" id="UP000002415">
    <property type="component" value="Chromosome"/>
</dbReference>
<dbReference type="GO" id="GO:0005829">
    <property type="term" value="C:cytosol"/>
    <property type="evidence" value="ECO:0007669"/>
    <property type="project" value="TreeGrafter"/>
</dbReference>
<dbReference type="GO" id="GO:0005524">
    <property type="term" value="F:ATP binding"/>
    <property type="evidence" value="ECO:0007669"/>
    <property type="project" value="UniProtKB-UniRule"/>
</dbReference>
<dbReference type="GO" id="GO:0036430">
    <property type="term" value="F:CMP kinase activity"/>
    <property type="evidence" value="ECO:0007669"/>
    <property type="project" value="RHEA"/>
</dbReference>
<dbReference type="GO" id="GO:0036431">
    <property type="term" value="F:dCMP kinase activity"/>
    <property type="evidence" value="ECO:0007669"/>
    <property type="project" value="RHEA"/>
</dbReference>
<dbReference type="GO" id="GO:0015949">
    <property type="term" value="P:nucleobase-containing small molecule interconversion"/>
    <property type="evidence" value="ECO:0007669"/>
    <property type="project" value="TreeGrafter"/>
</dbReference>
<dbReference type="GO" id="GO:0006220">
    <property type="term" value="P:pyrimidine nucleotide metabolic process"/>
    <property type="evidence" value="ECO:0007669"/>
    <property type="project" value="UniProtKB-UniRule"/>
</dbReference>
<dbReference type="CDD" id="cd02020">
    <property type="entry name" value="CMPK"/>
    <property type="match status" value="1"/>
</dbReference>
<dbReference type="Gene3D" id="3.40.50.300">
    <property type="entry name" value="P-loop containing nucleotide triphosphate hydrolases"/>
    <property type="match status" value="1"/>
</dbReference>
<dbReference type="HAMAP" id="MF_00238">
    <property type="entry name" value="Cytidyl_kinase_type1"/>
    <property type="match status" value="1"/>
</dbReference>
<dbReference type="InterPro" id="IPR003136">
    <property type="entry name" value="Cytidylate_kin"/>
</dbReference>
<dbReference type="InterPro" id="IPR011994">
    <property type="entry name" value="Cytidylate_kinase_dom"/>
</dbReference>
<dbReference type="InterPro" id="IPR027417">
    <property type="entry name" value="P-loop_NTPase"/>
</dbReference>
<dbReference type="NCBIfam" id="TIGR00017">
    <property type="entry name" value="cmk"/>
    <property type="match status" value="1"/>
</dbReference>
<dbReference type="PANTHER" id="PTHR21299:SF2">
    <property type="entry name" value="CYTIDYLATE KINASE"/>
    <property type="match status" value="1"/>
</dbReference>
<dbReference type="PANTHER" id="PTHR21299">
    <property type="entry name" value="CYTIDYLATE KINASE/PANTOATE-BETA-ALANINE LIGASE"/>
    <property type="match status" value="1"/>
</dbReference>
<dbReference type="Pfam" id="PF02224">
    <property type="entry name" value="Cytidylate_kin"/>
    <property type="match status" value="1"/>
</dbReference>
<dbReference type="SUPFAM" id="SSF52540">
    <property type="entry name" value="P-loop containing nucleoside triphosphate hydrolases"/>
    <property type="match status" value="1"/>
</dbReference>
<accession>A7HME6</accession>
<gene>
    <name evidence="1" type="primary">cmk</name>
    <name type="ordered locus">Fnod_1232</name>
</gene>
<comment type="catalytic activity">
    <reaction evidence="1">
        <text>CMP + ATP = CDP + ADP</text>
        <dbReference type="Rhea" id="RHEA:11600"/>
        <dbReference type="ChEBI" id="CHEBI:30616"/>
        <dbReference type="ChEBI" id="CHEBI:58069"/>
        <dbReference type="ChEBI" id="CHEBI:60377"/>
        <dbReference type="ChEBI" id="CHEBI:456216"/>
        <dbReference type="EC" id="2.7.4.25"/>
    </reaction>
</comment>
<comment type="catalytic activity">
    <reaction evidence="1">
        <text>dCMP + ATP = dCDP + ADP</text>
        <dbReference type="Rhea" id="RHEA:25094"/>
        <dbReference type="ChEBI" id="CHEBI:30616"/>
        <dbReference type="ChEBI" id="CHEBI:57566"/>
        <dbReference type="ChEBI" id="CHEBI:58593"/>
        <dbReference type="ChEBI" id="CHEBI:456216"/>
        <dbReference type="EC" id="2.7.4.25"/>
    </reaction>
</comment>
<comment type="subcellular location">
    <subcellularLocation>
        <location evidence="1">Cytoplasm</location>
    </subcellularLocation>
</comment>
<comment type="similarity">
    <text evidence="1">Belongs to the cytidylate kinase family. Type 1 subfamily.</text>
</comment>
<protein>
    <recommendedName>
        <fullName evidence="1">Cytidylate kinase</fullName>
        <shortName evidence="1">CK</shortName>
        <ecNumber evidence="1">2.7.4.25</ecNumber>
    </recommendedName>
    <alternativeName>
        <fullName evidence="1">Cytidine monophosphate kinase</fullName>
        <shortName evidence="1">CMP kinase</shortName>
    </alternativeName>
</protein>